<gene>
    <name evidence="1" type="primary">pdxJ</name>
    <name type="ordered locus">Ppro_2257</name>
</gene>
<organism>
    <name type="scientific">Pelobacter propionicus (strain DSM 2379 / NBRC 103807 / OttBd1)</name>
    <dbReference type="NCBI Taxonomy" id="338966"/>
    <lineage>
        <taxon>Bacteria</taxon>
        <taxon>Pseudomonadati</taxon>
        <taxon>Thermodesulfobacteriota</taxon>
        <taxon>Desulfuromonadia</taxon>
        <taxon>Desulfuromonadales</taxon>
        <taxon>Desulfuromonadaceae</taxon>
        <taxon>Pelobacter</taxon>
    </lineage>
</organism>
<reference key="1">
    <citation type="submission" date="2006-10" db="EMBL/GenBank/DDBJ databases">
        <title>Complete sequence of chromosome of Pelobacter propionicus DSM 2379.</title>
        <authorList>
            <consortium name="US DOE Joint Genome Institute"/>
            <person name="Copeland A."/>
            <person name="Lucas S."/>
            <person name="Lapidus A."/>
            <person name="Barry K."/>
            <person name="Detter J.C."/>
            <person name="Glavina del Rio T."/>
            <person name="Hammon N."/>
            <person name="Israni S."/>
            <person name="Dalin E."/>
            <person name="Tice H."/>
            <person name="Pitluck S."/>
            <person name="Saunders E."/>
            <person name="Brettin T."/>
            <person name="Bruce D."/>
            <person name="Han C."/>
            <person name="Tapia R."/>
            <person name="Schmutz J."/>
            <person name="Larimer F."/>
            <person name="Land M."/>
            <person name="Hauser L."/>
            <person name="Kyrpides N."/>
            <person name="Kim E."/>
            <person name="Lovley D."/>
            <person name="Richardson P."/>
        </authorList>
    </citation>
    <scope>NUCLEOTIDE SEQUENCE [LARGE SCALE GENOMIC DNA]</scope>
    <source>
        <strain>DSM 2379 / NBRC 103807 / OttBd1</strain>
    </source>
</reference>
<sequence>MAKLGLNVDHVATVRQARGGMEPDPVTAAALGELAGAEGITIHLREDRRHIQDRDLEILRRTVKTKLNLEMAATQEMVRIALRTKPEQVTLVPEKRQELTTEGGLDVILNLKAITDAVKRLRDGGIVVSLFVDPDQEQIKAANKSGADYIEIHTGAYADAPDWPSQKRQLEEIDAAIKLASKVGMGVNAGHGINYVNIKPLAALGGIEEYNIGHSIMARAILVGMDRAVKDMVELIKYA</sequence>
<evidence type="ECO:0000255" key="1">
    <source>
        <dbReference type="HAMAP-Rule" id="MF_00279"/>
    </source>
</evidence>
<accession>A1AR94</accession>
<comment type="function">
    <text evidence="1">Catalyzes the complicated ring closure reaction between the two acyclic compounds 1-deoxy-D-xylulose-5-phosphate (DXP) and 3-amino-2-oxopropyl phosphate (1-amino-acetone-3-phosphate or AAP) to form pyridoxine 5'-phosphate (PNP) and inorganic phosphate.</text>
</comment>
<comment type="catalytic activity">
    <reaction evidence="1">
        <text>3-amino-2-oxopropyl phosphate + 1-deoxy-D-xylulose 5-phosphate = pyridoxine 5'-phosphate + phosphate + 2 H2O + H(+)</text>
        <dbReference type="Rhea" id="RHEA:15265"/>
        <dbReference type="ChEBI" id="CHEBI:15377"/>
        <dbReference type="ChEBI" id="CHEBI:15378"/>
        <dbReference type="ChEBI" id="CHEBI:43474"/>
        <dbReference type="ChEBI" id="CHEBI:57279"/>
        <dbReference type="ChEBI" id="CHEBI:57792"/>
        <dbReference type="ChEBI" id="CHEBI:58589"/>
        <dbReference type="EC" id="2.6.99.2"/>
    </reaction>
</comment>
<comment type="pathway">
    <text evidence="1">Cofactor biosynthesis; pyridoxine 5'-phosphate biosynthesis; pyridoxine 5'-phosphate from D-erythrose 4-phosphate: step 5/5.</text>
</comment>
<comment type="subunit">
    <text evidence="1">Homooctamer; tetramer of dimers.</text>
</comment>
<comment type="subcellular location">
    <subcellularLocation>
        <location evidence="1">Cytoplasm</location>
    </subcellularLocation>
</comment>
<comment type="similarity">
    <text evidence="1">Belongs to the PNP synthase family.</text>
</comment>
<dbReference type="EC" id="2.6.99.2" evidence="1"/>
<dbReference type="EMBL" id="CP000482">
    <property type="protein sequence ID" value="ABK99864.1"/>
    <property type="molecule type" value="Genomic_DNA"/>
</dbReference>
<dbReference type="RefSeq" id="WP_011736124.1">
    <property type="nucleotide sequence ID" value="NC_008609.1"/>
</dbReference>
<dbReference type="SMR" id="A1AR94"/>
<dbReference type="STRING" id="338966.Ppro_2257"/>
<dbReference type="KEGG" id="ppd:Ppro_2257"/>
<dbReference type="eggNOG" id="COG0854">
    <property type="taxonomic scope" value="Bacteria"/>
</dbReference>
<dbReference type="HOGENOM" id="CLU_074563_0_0_7"/>
<dbReference type="OrthoDB" id="9806590at2"/>
<dbReference type="UniPathway" id="UPA00244">
    <property type="reaction ID" value="UER00313"/>
</dbReference>
<dbReference type="Proteomes" id="UP000006732">
    <property type="component" value="Chromosome"/>
</dbReference>
<dbReference type="GO" id="GO:0005829">
    <property type="term" value="C:cytosol"/>
    <property type="evidence" value="ECO:0007669"/>
    <property type="project" value="TreeGrafter"/>
</dbReference>
<dbReference type="GO" id="GO:0033856">
    <property type="term" value="F:pyridoxine 5'-phosphate synthase activity"/>
    <property type="evidence" value="ECO:0007669"/>
    <property type="project" value="UniProtKB-EC"/>
</dbReference>
<dbReference type="GO" id="GO:0008615">
    <property type="term" value="P:pyridoxine biosynthetic process"/>
    <property type="evidence" value="ECO:0007669"/>
    <property type="project" value="UniProtKB-UniRule"/>
</dbReference>
<dbReference type="CDD" id="cd00003">
    <property type="entry name" value="PNPsynthase"/>
    <property type="match status" value="1"/>
</dbReference>
<dbReference type="Gene3D" id="3.20.20.70">
    <property type="entry name" value="Aldolase class I"/>
    <property type="match status" value="1"/>
</dbReference>
<dbReference type="HAMAP" id="MF_00279">
    <property type="entry name" value="PdxJ"/>
    <property type="match status" value="1"/>
</dbReference>
<dbReference type="InterPro" id="IPR013785">
    <property type="entry name" value="Aldolase_TIM"/>
</dbReference>
<dbReference type="InterPro" id="IPR004569">
    <property type="entry name" value="PyrdxlP_synth_PdxJ"/>
</dbReference>
<dbReference type="InterPro" id="IPR036130">
    <property type="entry name" value="Pyridoxine-5'_phos_synth"/>
</dbReference>
<dbReference type="NCBIfam" id="TIGR00559">
    <property type="entry name" value="pdxJ"/>
    <property type="match status" value="1"/>
</dbReference>
<dbReference type="NCBIfam" id="NF003625">
    <property type="entry name" value="PRK05265.1-3"/>
    <property type="match status" value="1"/>
</dbReference>
<dbReference type="NCBIfam" id="NF003627">
    <property type="entry name" value="PRK05265.1-5"/>
    <property type="match status" value="1"/>
</dbReference>
<dbReference type="PANTHER" id="PTHR30456">
    <property type="entry name" value="PYRIDOXINE 5'-PHOSPHATE SYNTHASE"/>
    <property type="match status" value="1"/>
</dbReference>
<dbReference type="PANTHER" id="PTHR30456:SF0">
    <property type="entry name" value="PYRIDOXINE 5'-PHOSPHATE SYNTHASE"/>
    <property type="match status" value="1"/>
</dbReference>
<dbReference type="Pfam" id="PF03740">
    <property type="entry name" value="PdxJ"/>
    <property type="match status" value="1"/>
</dbReference>
<dbReference type="SUPFAM" id="SSF63892">
    <property type="entry name" value="Pyridoxine 5'-phosphate synthase"/>
    <property type="match status" value="1"/>
</dbReference>
<feature type="chain" id="PRO_1000022385" description="Pyridoxine 5'-phosphate synthase">
    <location>
        <begin position="1"/>
        <end position="239"/>
    </location>
</feature>
<feature type="active site" description="Proton acceptor" evidence="1">
    <location>
        <position position="43"/>
    </location>
</feature>
<feature type="active site" description="Proton acceptor" evidence="1">
    <location>
        <position position="70"/>
    </location>
</feature>
<feature type="active site" description="Proton donor" evidence="1">
    <location>
        <position position="191"/>
    </location>
</feature>
<feature type="binding site" evidence="1">
    <location>
        <position position="7"/>
    </location>
    <ligand>
        <name>3-amino-2-oxopropyl phosphate</name>
        <dbReference type="ChEBI" id="CHEBI:57279"/>
    </ligand>
</feature>
<feature type="binding site" evidence="1">
    <location>
        <begin position="9"/>
        <end position="10"/>
    </location>
    <ligand>
        <name>1-deoxy-D-xylulose 5-phosphate</name>
        <dbReference type="ChEBI" id="CHEBI:57792"/>
    </ligand>
</feature>
<feature type="binding site" evidence="1">
    <location>
        <position position="18"/>
    </location>
    <ligand>
        <name>3-amino-2-oxopropyl phosphate</name>
        <dbReference type="ChEBI" id="CHEBI:57279"/>
    </ligand>
</feature>
<feature type="binding site" evidence="1">
    <location>
        <position position="45"/>
    </location>
    <ligand>
        <name>1-deoxy-D-xylulose 5-phosphate</name>
        <dbReference type="ChEBI" id="CHEBI:57792"/>
    </ligand>
</feature>
<feature type="binding site" evidence="1">
    <location>
        <position position="50"/>
    </location>
    <ligand>
        <name>1-deoxy-D-xylulose 5-phosphate</name>
        <dbReference type="ChEBI" id="CHEBI:57792"/>
    </ligand>
</feature>
<feature type="binding site" evidence="1">
    <location>
        <position position="100"/>
    </location>
    <ligand>
        <name>1-deoxy-D-xylulose 5-phosphate</name>
        <dbReference type="ChEBI" id="CHEBI:57792"/>
    </ligand>
</feature>
<feature type="binding site" evidence="1">
    <location>
        <position position="192"/>
    </location>
    <ligand>
        <name>3-amino-2-oxopropyl phosphate</name>
        <dbReference type="ChEBI" id="CHEBI:57279"/>
    </ligand>
</feature>
<feature type="binding site" evidence="1">
    <location>
        <begin position="213"/>
        <end position="214"/>
    </location>
    <ligand>
        <name>3-amino-2-oxopropyl phosphate</name>
        <dbReference type="ChEBI" id="CHEBI:57279"/>
    </ligand>
</feature>
<feature type="site" description="Transition state stabilizer" evidence="1">
    <location>
        <position position="151"/>
    </location>
</feature>
<keyword id="KW-0963">Cytoplasm</keyword>
<keyword id="KW-0664">Pyridoxine biosynthesis</keyword>
<keyword id="KW-1185">Reference proteome</keyword>
<keyword id="KW-0808">Transferase</keyword>
<protein>
    <recommendedName>
        <fullName evidence="1">Pyridoxine 5'-phosphate synthase</fullName>
        <shortName evidence="1">PNP synthase</shortName>
        <ecNumber evidence="1">2.6.99.2</ecNumber>
    </recommendedName>
</protein>
<proteinExistence type="inferred from homology"/>
<name>PDXJ_PELPD</name>